<sequence length="953" mass="106040">MALVFQFGQPVRAQPLPGLCHGKLIRTNACDVCNSTDLPEVEIISLLEEQLPHYKLRADTIYGYDHDDWLHTPLISPDANIDLTTEQIEETLKYFLLCAERVGQMTKTYNDIDAVTRLLEEKERDLELAARIGQSLLKKNKTLTERNELLEEQVEHIREEVSQLRHELSMKDELLQFYTSAAEESEPESVCSTPLKRNESSSSVQNYFHLDSLQKKLKDLEEENVVLRSEASQLKTETITYEEKEQQLVNDCVKELRDANVQIASISEELAKKTEDAARQQEEITHLLSQIVDLQKKAKACAVENEELVQHLGAAKDAQRQLTAELRELEDKYAECMEMLHEAQEELKNLRNKTMPNTTSRRYHSLGLFPMDSLAAEIEGTMRKELQLEEAESPDITHQKRVFETVRNINQVVKQRSLTPSPMNIPGSNQSSAMNSLLSSCVSTPRSSFYGSDIGNVVLDNKTNSIILETEAADLGNDERSKKPGTPGTPGSHDLETALRRLSLRRENYLSERRFFEEEQERKLQELAEKGELRSGSLTPTESIMSLGTHSRFSEFTGFSGMSFSSRSYLPEKLQIVKPLEGSATLHHWQQLAQPHLGGILDPRPGVVTKGFRTLDVDLDEVYCLNDFEEDDTGDHISLPRLATSTPVQHPETSAHHPGKCMSQTNSTFTFTTCRILHPSDELTRVTPSLNSAPTPACGSTSHLKSTPVATPCTPRRLSLAESFTNTRESTTTMSTSLGLVWLLKERGISAAVYDPQSWDRAGRGSLLHSYTPKMAVIPSTPPNSPMQTPTSSPPSFEFKCTSPPYDNFLASKPASSILREVREKNVRSSESQTDVSVSNLNLVDKVRRFGVAKVVNSGRAHVPTLTEEQGPLLCGPPGPAPALVPRGLVPEGLPLRCPTVTSAIGGLQLNSGIRRNRSFPTMVGSSMQMKAPVTLTSGILMGAKLSKQTSLR</sequence>
<keyword id="KW-0025">Alternative splicing</keyword>
<keyword id="KW-0175">Coiled coil</keyword>
<keyword id="KW-0963">Cytoplasm</keyword>
<keyword id="KW-0903">Direct protein sequencing</keyword>
<keyword id="KW-0225">Disease variant</keyword>
<keyword id="KW-0967">Endosome</keyword>
<keyword id="KW-0887">Epilepsy</keyword>
<keyword id="KW-0325">Glycoprotein</keyword>
<keyword id="KW-0472">Membrane</keyword>
<keyword id="KW-0496">Mitochondrion</keyword>
<keyword id="KW-0539">Nucleus</keyword>
<keyword id="KW-0597">Phosphoprotein</keyword>
<keyword id="KW-1267">Proteomics identification</keyword>
<keyword id="KW-1185">Reference proteome</keyword>
<accession>Q9UPV9</accession>
<accession>E9PDS2</accession>
<accession>J3KNT7</accession>
<accession>Q63HR0</accession>
<accession>Q659B5</accession>
<accession>Q96B69</accession>
<organism>
    <name type="scientific">Homo sapiens</name>
    <name type="common">Human</name>
    <dbReference type="NCBI Taxonomy" id="9606"/>
    <lineage>
        <taxon>Eukaryota</taxon>
        <taxon>Metazoa</taxon>
        <taxon>Chordata</taxon>
        <taxon>Craniata</taxon>
        <taxon>Vertebrata</taxon>
        <taxon>Euteleostomi</taxon>
        <taxon>Mammalia</taxon>
        <taxon>Eutheria</taxon>
        <taxon>Euarchontoglires</taxon>
        <taxon>Primates</taxon>
        <taxon>Haplorrhini</taxon>
        <taxon>Catarrhini</taxon>
        <taxon>Hominidae</taxon>
        <taxon>Homo</taxon>
    </lineage>
</organism>
<proteinExistence type="evidence at protein level"/>
<protein>
    <recommendedName>
        <fullName>Trafficking kinesin-binding protein 1</fullName>
    </recommendedName>
    <alternativeName>
        <fullName>106 kDa O-GlcNAc transferase-interacting protein</fullName>
    </alternativeName>
    <alternativeName>
        <fullName evidence="17">Protein Milton</fullName>
    </alternativeName>
</protein>
<name>TRAK1_HUMAN</name>
<reference key="1">
    <citation type="journal article" date="1999" name="DNA Res.">
        <title>Prediction of the coding sequences of unidentified human genes. XIV. The complete sequences of 100 new cDNA clones from brain which code for large proteins in vitro.</title>
        <authorList>
            <person name="Kikuno R."/>
            <person name="Nagase T."/>
            <person name="Ishikawa K."/>
            <person name="Hirosawa M."/>
            <person name="Miyajima N."/>
            <person name="Tanaka A."/>
            <person name="Kotani H."/>
            <person name="Nomura N."/>
            <person name="Ohara O."/>
        </authorList>
    </citation>
    <scope>NUCLEOTIDE SEQUENCE [LARGE SCALE MRNA] (ISOFORM 1)</scope>
    <source>
        <tissue>Brain</tissue>
    </source>
</reference>
<reference key="2">
    <citation type="journal article" date="2007" name="BMC Genomics">
        <title>The full-ORF clone resource of the German cDNA consortium.</title>
        <authorList>
            <person name="Bechtel S."/>
            <person name="Rosenfelder H."/>
            <person name="Duda A."/>
            <person name="Schmidt C.P."/>
            <person name="Ernst U."/>
            <person name="Wellenreuther R."/>
            <person name="Mehrle A."/>
            <person name="Schuster C."/>
            <person name="Bahr A."/>
            <person name="Bloecker H."/>
            <person name="Heubner D."/>
            <person name="Hoerlein A."/>
            <person name="Michel G."/>
            <person name="Wedler H."/>
            <person name="Koehrer K."/>
            <person name="Ottenwaelder B."/>
            <person name="Poustka A."/>
            <person name="Wiemann S."/>
            <person name="Schupp I."/>
        </authorList>
    </citation>
    <scope>NUCLEOTIDE SEQUENCE [LARGE SCALE MRNA] (ISOFORM 2)</scope>
    <scope>NUCLEOTIDE SEQUENCE [LARGE SCALE MRNA] OF 1-508 (ISOFORM 3)</scope>
    <source>
        <tissue>Kidney</tissue>
        <tissue>Salivary gland</tissue>
    </source>
</reference>
<reference key="3">
    <citation type="journal article" date="2006" name="Nature">
        <title>The DNA sequence, annotation and analysis of human chromosome 3.</title>
        <authorList>
            <person name="Muzny D.M."/>
            <person name="Scherer S.E."/>
            <person name="Kaul R."/>
            <person name="Wang J."/>
            <person name="Yu J."/>
            <person name="Sudbrak R."/>
            <person name="Buhay C.J."/>
            <person name="Chen R."/>
            <person name="Cree A."/>
            <person name="Ding Y."/>
            <person name="Dugan-Rocha S."/>
            <person name="Gill R."/>
            <person name="Gunaratne P."/>
            <person name="Harris R.A."/>
            <person name="Hawes A.C."/>
            <person name="Hernandez J."/>
            <person name="Hodgson A.V."/>
            <person name="Hume J."/>
            <person name="Jackson A."/>
            <person name="Khan Z.M."/>
            <person name="Kovar-Smith C."/>
            <person name="Lewis L.R."/>
            <person name="Lozado R.J."/>
            <person name="Metzker M.L."/>
            <person name="Milosavljevic A."/>
            <person name="Miner G.R."/>
            <person name="Morgan M.B."/>
            <person name="Nazareth L.V."/>
            <person name="Scott G."/>
            <person name="Sodergren E."/>
            <person name="Song X.-Z."/>
            <person name="Steffen D."/>
            <person name="Wei S."/>
            <person name="Wheeler D.A."/>
            <person name="Wright M.W."/>
            <person name="Worley K.C."/>
            <person name="Yuan Y."/>
            <person name="Zhang Z."/>
            <person name="Adams C.Q."/>
            <person name="Ansari-Lari M.A."/>
            <person name="Ayele M."/>
            <person name="Brown M.J."/>
            <person name="Chen G."/>
            <person name="Chen Z."/>
            <person name="Clendenning J."/>
            <person name="Clerc-Blankenburg K.P."/>
            <person name="Chen R."/>
            <person name="Chen Z."/>
            <person name="Davis C."/>
            <person name="Delgado O."/>
            <person name="Dinh H.H."/>
            <person name="Dong W."/>
            <person name="Draper H."/>
            <person name="Ernst S."/>
            <person name="Fu G."/>
            <person name="Gonzalez-Garay M.L."/>
            <person name="Garcia D.K."/>
            <person name="Gillett W."/>
            <person name="Gu J."/>
            <person name="Hao B."/>
            <person name="Haugen E."/>
            <person name="Havlak P."/>
            <person name="He X."/>
            <person name="Hennig S."/>
            <person name="Hu S."/>
            <person name="Huang W."/>
            <person name="Jackson L.R."/>
            <person name="Jacob L.S."/>
            <person name="Kelly S.H."/>
            <person name="Kube M."/>
            <person name="Levy R."/>
            <person name="Li Z."/>
            <person name="Liu B."/>
            <person name="Liu J."/>
            <person name="Liu W."/>
            <person name="Lu J."/>
            <person name="Maheshwari M."/>
            <person name="Nguyen B.-V."/>
            <person name="Okwuonu G.O."/>
            <person name="Palmeiri A."/>
            <person name="Pasternak S."/>
            <person name="Perez L.M."/>
            <person name="Phelps K.A."/>
            <person name="Plopper F.J."/>
            <person name="Qiang B."/>
            <person name="Raymond C."/>
            <person name="Rodriguez R."/>
            <person name="Saenphimmachak C."/>
            <person name="Santibanez J."/>
            <person name="Shen H."/>
            <person name="Shen Y."/>
            <person name="Subramanian S."/>
            <person name="Tabor P.E."/>
            <person name="Verduzco D."/>
            <person name="Waldron L."/>
            <person name="Wang J."/>
            <person name="Wang J."/>
            <person name="Wang Q."/>
            <person name="Williams G.A."/>
            <person name="Wong G.K.-S."/>
            <person name="Yao Z."/>
            <person name="Zhang J."/>
            <person name="Zhang X."/>
            <person name="Zhao G."/>
            <person name="Zhou J."/>
            <person name="Zhou Y."/>
            <person name="Nelson D."/>
            <person name="Lehrach H."/>
            <person name="Reinhardt R."/>
            <person name="Naylor S.L."/>
            <person name="Yang H."/>
            <person name="Olson M."/>
            <person name="Weinstock G."/>
            <person name="Gibbs R.A."/>
        </authorList>
    </citation>
    <scope>NUCLEOTIDE SEQUENCE [LARGE SCALE GENOMIC DNA]</scope>
</reference>
<reference key="4">
    <citation type="journal article" date="2004" name="Genome Res.">
        <title>The status, quality, and expansion of the NIH full-length cDNA project: the Mammalian Gene Collection (MGC).</title>
        <authorList>
            <consortium name="The MGC Project Team"/>
        </authorList>
    </citation>
    <scope>NUCLEOTIDE SEQUENCE [LARGE SCALE MRNA] (ISOFORM 2)</scope>
    <source>
        <tissue>Kidney</tissue>
    </source>
</reference>
<reference key="5">
    <citation type="journal article" date="2014" name="Cell">
        <title>Glucose regulates mitochondrial motility via Milton modification by O-GlcNAc transferase.</title>
        <authorList>
            <person name="Pekkurnaz G."/>
            <person name="Trinidad J.C."/>
            <person name="Wang X."/>
            <person name="Kong D."/>
            <person name="Schwarz T.L."/>
        </authorList>
    </citation>
    <scope>PROTEIN SEQUENCE OF 448-462; 535-552; 642-660; 676-685; 686-705; 717-728; 829-846 AND 932-945</scope>
    <scope>FUNCTION</scope>
    <scope>IDENTIFICATION BY MASS SPECTROMETRY</scope>
    <scope>INTERACTION WITH KIF5B; OGT; RHOT1 AND RHOT2</scope>
    <scope>SUBCELLULAR LOCATION</scope>
    <scope>GLYCOSYLATION AT SER-447; SER-680; SER-719 AND THR-935</scope>
    <scope>MUTAGENESIS OF SER-447; 658-PRO--THR-672; SER-829; SER-830 AND SER-938</scope>
</reference>
<reference key="6">
    <citation type="journal article" date="2003" name="J. Biol. Chem.">
        <title>Identification and cloning of a novel family of coiled-coil domain proteins that interact with O-GlcNAc transferase.</title>
        <authorList>
            <person name="Iyer S.P.N."/>
            <person name="Akimoto Y."/>
            <person name="Hart G.W."/>
        </authorList>
    </citation>
    <scope>SUBCELLULAR LOCATION</scope>
    <scope>INTERACTION WITH OGT</scope>
    <scope>GLYCOSYLATION</scope>
</reference>
<reference key="7">
    <citation type="journal article" date="2005" name="J. Biol. Chem.">
        <title>GRIF-1 and OIP106, members of a novel gene family of coiled-coil domain proteins: association in vivo and in vitro with kinesin.</title>
        <authorList>
            <person name="Brickley K."/>
            <person name="Smith M.J."/>
            <person name="Beck M."/>
            <person name="Stephenson F.A."/>
        </authorList>
    </citation>
    <scope>INTERACTION WITH KIF5C</scope>
    <scope>SUBCELLULAR LOCATION</scope>
</reference>
<reference key="8">
    <citation type="journal article" date="2006" name="Biochem. Biophys. Res. Commun.">
        <title>The atypical Rho GTPases Miro-1 and Miro-2 have essential roles in mitochondrial trafficking.</title>
        <authorList>
            <person name="Fransson S."/>
            <person name="Ruusala A."/>
            <person name="Aspenstroem P."/>
        </authorList>
    </citation>
    <scope>SUBCELLULAR LOCATION</scope>
    <scope>INTERACTION WITH RHOT1 AND RHOT2</scope>
</reference>
<reference key="9">
    <citation type="journal article" date="2008" name="J. Mol. Biol.">
        <title>Hypertonia-associated protein Trak1 is a novel regulator of endosome-to-lysosome trafficking.</title>
        <authorList>
            <person name="Webber E."/>
            <person name="Li L."/>
            <person name="Chin L.S."/>
        </authorList>
    </citation>
    <scope>FUNCTION</scope>
    <scope>SUBCELLULAR LOCATION</scope>
    <scope>INTERACTION WITH HGS</scope>
</reference>
<reference key="10">
    <citation type="journal article" date="2008" name="Proc. Natl. Acad. Sci. U.S.A.">
        <title>A quantitative atlas of mitotic phosphorylation.</title>
        <authorList>
            <person name="Dephoure N."/>
            <person name="Zhou C."/>
            <person name="Villen J."/>
            <person name="Beausoleil S.A."/>
            <person name="Bakalarski C.E."/>
            <person name="Elledge S.J."/>
            <person name="Gygi S.P."/>
        </authorList>
    </citation>
    <scope>IDENTIFICATION BY MASS SPECTROMETRY [LARGE SCALE ANALYSIS]</scope>
    <source>
        <tissue>Cervix carcinoma</tissue>
    </source>
</reference>
<reference key="11">
    <citation type="journal article" date="2009" name="Cancer Lett.">
        <title>Identification of TRAK1 (Trafficking protein, kinesin-binding 1) as MGb2-Ag: a novel cancer biomarker.</title>
        <authorList>
            <person name="Zhang F."/>
            <person name="Ren G."/>
            <person name="Lu Y."/>
            <person name="Jin B."/>
            <person name="Wang J."/>
            <person name="Chen X."/>
            <person name="Liu Z."/>
            <person name="Li K."/>
            <person name="Nie Y."/>
            <person name="Wang X."/>
            <person name="Fan D."/>
        </authorList>
    </citation>
    <scope>TISSUE SPECIFICITY</scope>
    <scope>SUBCELLULAR LOCATION</scope>
    <scope>MARKER FOR GASTRIC CANCER</scope>
</reference>
<reference key="12">
    <citation type="journal article" date="2009" name="J. Cell Biol.">
        <title>HUMMR, a hypoxia- and HIF-1alpha-inducible protein, alters mitochondrial distribution and transport.</title>
        <authorList>
            <person name="Li Y."/>
            <person name="Lim S."/>
            <person name="Hoffman D."/>
            <person name="Aspenstrom P."/>
            <person name="Federoff H.J."/>
            <person name="Rempe D.A."/>
        </authorList>
    </citation>
    <scope>SUBCELLULAR LOCATION</scope>
</reference>
<reference key="13">
    <citation type="journal article" date="2013" name="J. Proteome Res.">
        <title>Toward a comprehensive characterization of a human cancer cell phosphoproteome.</title>
        <authorList>
            <person name="Zhou H."/>
            <person name="Di Palma S."/>
            <person name="Preisinger C."/>
            <person name="Peng M."/>
            <person name="Polat A.N."/>
            <person name="Heck A.J."/>
            <person name="Mohammed S."/>
        </authorList>
    </citation>
    <scope>PHOSPHORYLATION [LARGE SCALE ANALYSIS] AT SER-919</scope>
    <scope>IDENTIFICATION BY MASS SPECTROMETRY [LARGE SCALE ANALYSIS]</scope>
    <source>
        <tissue>Erythroleukemia</tissue>
    </source>
</reference>
<reference key="14">
    <citation type="journal article" date="2017" name="Brain">
        <title>Deleterious variants in TRAK1 disrupt mitochondrial movement and cause fatal encephalopathy.</title>
        <authorList>
            <person name="Barel O."/>
            <person name="Malicdan M.C.V."/>
            <person name="Ben-Zeev B."/>
            <person name="Kandel J."/>
            <person name="Pri-Chen H."/>
            <person name="Stephen J."/>
            <person name="Castro I.G."/>
            <person name="Metz J."/>
            <person name="Atawa O."/>
            <person name="Moshkovitz S."/>
            <person name="Ganelin E."/>
            <person name="Barshack I."/>
            <person name="Polak-Charcon S."/>
            <person name="Nass D."/>
            <person name="Marek-Yagel D."/>
            <person name="Amariglio N."/>
            <person name="Shalva N."/>
            <person name="Vilboux T."/>
            <person name="Ferreira C."/>
            <person name="Pode-Shakked B."/>
            <person name="Heimer G."/>
            <person name="Hoffmann C."/>
            <person name="Yardeni T."/>
            <person name="Nissenkorn A."/>
            <person name="Avivi C."/>
            <person name="Eyal E."/>
            <person name="Kol N."/>
            <person name="Glick Saar E."/>
            <person name="Wallace D.C."/>
            <person name="Gahl W.A."/>
            <person name="Rechavi G."/>
            <person name="Schrader M."/>
            <person name="Eckmann D.M."/>
            <person name="Anikster Y."/>
        </authorList>
    </citation>
    <scope>INVOLVEMENT IN DEE68</scope>
</reference>
<reference key="15">
    <citation type="journal article" date="2017" name="Hum. Genet.">
        <title>Expanding the genetic heterogeneity of intellectual disability.</title>
        <authorList>
            <person name="Anazi S."/>
            <person name="Maddirevula S."/>
            <person name="Salpietro V."/>
            <person name="Asi Y.T."/>
            <person name="Alsahli S."/>
            <person name="Alhashem A."/>
            <person name="Shamseldin H.E."/>
            <person name="AlZahrani F."/>
            <person name="Patel N."/>
            <person name="Ibrahim N."/>
            <person name="Abdulwahab F.M."/>
            <person name="Hashem M."/>
            <person name="Alhashmi N."/>
            <person name="Al Murshedi F."/>
            <person name="Al Kindy A."/>
            <person name="Alshaer A."/>
            <person name="Rumayyan A."/>
            <person name="Al Tala S."/>
            <person name="Kurdi W."/>
            <person name="Alsaman A."/>
            <person name="Alasmari A."/>
            <person name="Banu S."/>
            <person name="Sultan T."/>
            <person name="Saleh M.M."/>
            <person name="Alkuraya H."/>
            <person name="Salih M.A."/>
            <person name="Aldhalaan H."/>
            <person name="Ben-Omran T."/>
            <person name="Al Musafri F."/>
            <person name="Ali R."/>
            <person name="Suleiman J."/>
            <person name="Tabarki B."/>
            <person name="El-Hattab A.W."/>
            <person name="Bupp C."/>
            <person name="Alfadhel M."/>
            <person name="Al Tassan N."/>
            <person name="Monies D."/>
            <person name="Arold S.T."/>
            <person name="Abouelhoda M."/>
            <person name="Lashley T."/>
            <person name="Houlden H."/>
            <person name="Faqeih E."/>
            <person name="Alkuraya F.S."/>
        </authorList>
    </citation>
    <scope>INVOLVEMENT IN DEE68</scope>
</reference>
<reference key="16">
    <citation type="journal article" date="2018" name="Hum. Genet.">
        <title>Correction to: Expanding the genetic heterogeneity of intellectual disability.</title>
        <authorList>
            <person name="Anazi S."/>
            <person name="Maddirevula S."/>
            <person name="Salpietro V."/>
            <person name="Asi Y.T."/>
            <person name="Alsahli S."/>
            <person name="Alhashem A."/>
            <person name="Shamseldin H.E."/>
            <person name="AlZahrani F."/>
            <person name="Patel N."/>
            <person name="Ibrahim N."/>
            <person name="Abdulwahab F.M."/>
            <person name="Hashem M."/>
            <person name="Alhashmi N."/>
            <person name="Al Murshedi F."/>
            <person name="Al Kindy A."/>
            <person name="Alshaer A."/>
            <person name="Rumayyan A."/>
            <person name="Al Tala S."/>
            <person name="Kurdi W."/>
            <person name="Alsaman A."/>
            <person name="Alasmari A."/>
            <person name="Banu S."/>
            <person name="Sultan T."/>
            <person name="Saleh M.M."/>
            <person name="Alkuraya H."/>
            <person name="Salih M.A."/>
            <person name="Aldhalaan H."/>
            <person name="Ben-Omran T."/>
            <person name="Al Musafri F."/>
            <person name="Ali R."/>
            <person name="Suleiman J."/>
            <person name="Tabarki B."/>
            <person name="El-Hattab A.W."/>
            <person name="Bupp C."/>
            <person name="Alfadhel M."/>
            <person name="Al Tassan N."/>
            <person name="Monies D."/>
            <person name="Arold S.T."/>
            <person name="Abouelhoda M."/>
            <person name="Lashley T."/>
            <person name="Houlden H."/>
            <person name="Faqeih E."/>
            <person name="Alkuraya F.S."/>
        </authorList>
    </citation>
    <scope>ERRATUM OF PUBMED:28940097</scope>
</reference>
<reference key="17">
    <citation type="journal article" date="2018" name="Brain">
        <title>Expanding the phenotype of TRAK1 mutations: hyperekplexia and refractory status epilepticus.</title>
        <authorList>
            <person name="Sagie S."/>
            <person name="Lerman-Sagie T."/>
            <person name="Maljevic S."/>
            <person name="Yosovich K."/>
            <person name="Detert K."/>
            <person name="Chung S.K."/>
            <person name="Rees M.I."/>
            <person name="Lerche H."/>
            <person name="Lev D."/>
        </authorList>
    </citation>
    <scope>INVOLVEMENT IN DEE68</scope>
    <scope>VARIANT DEE68 PRO-329</scope>
</reference>
<evidence type="ECO:0000250" key="1">
    <source>
        <dbReference type="UniProtKB" id="Q6PD31"/>
    </source>
</evidence>
<evidence type="ECO:0000250" key="2">
    <source>
        <dbReference type="UniProtKB" id="Q960V3"/>
    </source>
</evidence>
<evidence type="ECO:0000255" key="3"/>
<evidence type="ECO:0000256" key="4">
    <source>
        <dbReference type="SAM" id="MobiDB-lite"/>
    </source>
</evidence>
<evidence type="ECO:0000269" key="5">
    <source>
    </source>
</evidence>
<evidence type="ECO:0000269" key="6">
    <source>
    </source>
</evidence>
<evidence type="ECO:0000269" key="7">
    <source>
    </source>
</evidence>
<evidence type="ECO:0000269" key="8">
    <source>
    </source>
</evidence>
<evidence type="ECO:0000269" key="9">
    <source>
    </source>
</evidence>
<evidence type="ECO:0000269" key="10">
    <source>
    </source>
</evidence>
<evidence type="ECO:0000269" key="11">
    <source>
    </source>
</evidence>
<evidence type="ECO:0000269" key="12">
    <source>
    </source>
</evidence>
<evidence type="ECO:0000269" key="13">
    <source>
    </source>
</evidence>
<evidence type="ECO:0000269" key="14">
    <source>
    </source>
</evidence>
<evidence type="ECO:0000303" key="15">
    <source>
    </source>
</evidence>
<evidence type="ECO:0000303" key="16">
    <source>
    </source>
</evidence>
<evidence type="ECO:0000303" key="17">
    <source>
    </source>
</evidence>
<evidence type="ECO:0000305" key="18"/>
<evidence type="ECO:0007744" key="19">
    <source>
    </source>
</evidence>
<gene>
    <name type="primary">TRAK1</name>
    <name type="synonym">KIAA1042</name>
    <name type="synonym">OIP106</name>
</gene>
<comment type="function">
    <text evidence="2 8 11">Involved in the regulation of endosome-to-lysosome trafficking, including endocytic trafficking of EGF-EGFR complexes and GABA-A receptors (PubMed:18675823). Involved in mitochondrial motility. When O-glycosylated, abolishes mitochondrial motility. Crucial for recruiting OGT to the mitochondrial surface of neuronal processes (PubMed:24995978). TRAK1 and RHOT form an essential protein complex that links KIF5 to mitochondria for light chain-independent, anterograde transport of mitochondria (By similarity).</text>
</comment>
<comment type="subunit">
    <text evidence="1 5 6 7 8 11">Interacts with RHOT1 and RHOT2 (PubMed:16630562). Found in a complex with KIF5B, OGT, RHOT1 and RHOT2 (PubMed:24995978). Interacts with HGS (PubMed:18675823). Interacts with GABRA1 (By similarity). Interacts with KIF5C (PubMed:15644324). Interacts with OGT; stable interaction is not required for glycosylation of this protein by OGT. Isoform 1 interacts with OGT (PubMed:12435728, PubMed:24995978).</text>
</comment>
<comment type="interaction">
    <interactant intactId="EBI-1105048">
        <id>Q9UPV9</id>
    </interactant>
    <interactant intactId="EBI-713468">
        <id>Q12840</id>
        <label>KIF5A</label>
    </interactant>
    <organismsDiffer>false</organismsDiffer>
    <experiments>3</experiments>
</comment>
<comment type="interaction">
    <interactant intactId="EBI-1105048">
        <id>Q9UPV9</id>
    </interactant>
    <interactant intactId="EBI-539828">
        <id>O15294</id>
        <label>OGT</label>
    </interactant>
    <organismsDiffer>false</organismsDiffer>
    <experiments>3</experiments>
</comment>
<comment type="interaction">
    <interactant intactId="EBI-1105048">
        <id>Q9UPV9</id>
    </interactant>
    <interactant intactId="EBI-1396430">
        <id>Q8IXI2</id>
        <label>RHOT1</label>
    </interactant>
    <organismsDiffer>false</organismsDiffer>
    <experiments>7</experiments>
</comment>
<comment type="interaction">
    <interactant intactId="EBI-1105048">
        <id>Q9UPV9</id>
    </interactant>
    <interactant intactId="EBI-1396563">
        <id>Q8IXI1</id>
        <label>RHOT2</label>
    </interactant>
    <organismsDiffer>false</organismsDiffer>
    <experiments>4</experiments>
</comment>
<comment type="interaction">
    <interactant intactId="EBI-1105048">
        <id>Q9UPV9</id>
    </interactant>
    <interactant intactId="EBI-920191">
        <id>Q2PQA9</id>
        <label>Kif5b</label>
    </interactant>
    <organismsDiffer>true</organismsDiffer>
    <experiments>3</experiments>
</comment>
<comment type="interaction">
    <interactant intactId="EBI-1105048">
        <id>Q9UPV9</id>
    </interactant>
    <interactant intactId="EBI-7614183">
        <id>P56558</id>
        <label>Ogt</label>
    </interactant>
    <organismsDiffer>true</organismsDiffer>
    <experiments>6</experiments>
</comment>
<comment type="subcellular location">
    <subcellularLocation>
        <location evidence="9">Cytoplasm</location>
    </subcellularLocation>
    <subcellularLocation>
        <location evidence="5">Nucleus</location>
    </subcellularLocation>
    <subcellularLocation>
        <location evidence="6 7 8 10">Mitochondrion</location>
    </subcellularLocation>
    <subcellularLocation>
        <location evidence="8">Early endosome</location>
    </subcellularLocation>
    <subcellularLocation>
        <location evidence="8">Endosome</location>
    </subcellularLocation>
    <subcellularLocation>
        <location evidence="11">Mitochondrion membrane</location>
    </subcellularLocation>
    <subcellularLocation>
        <location evidence="1">Cytoplasm</location>
        <location evidence="1">Cell cortex</location>
    </subcellularLocation>
    <text evidence="8 10">Predominantly associated with early endosome. The localization to early endosomes depends on its interaction with HGS/HRS (PubMed:18675823). Colocalizes with MGARP at the mitochondria (PubMed:19528298).</text>
</comment>
<comment type="alternative products">
    <event type="alternative splicing"/>
    <isoform>
        <id>Q9UPV9-1</id>
        <name>1</name>
        <name evidence="17">Milton1</name>
        <sequence type="displayed"/>
    </isoform>
    <isoform>
        <id>Q9UPV9-2</id>
        <name>2</name>
        <sequence type="described" ref="VSP_010839 VSP_010840 VSP_010841"/>
    </isoform>
    <isoform>
        <id>Q9UPV9-3</id>
        <name>3</name>
        <sequence type="described" ref="VSP_045558 VSP_045559 VSP_045560"/>
    </isoform>
</comment>
<comment type="tissue specificity">
    <text evidence="9">High expression in spinal cord and moderate expression in all other tissues and specific brain regions examined. Expressed in all cell lines examined.</text>
</comment>
<comment type="domain">
    <text>The C-terminal region is required for the early endosomal and mitochondrial localization.</text>
</comment>
<comment type="PTM">
    <text evidence="5 11">O-glycosylated (PubMed:12435728, PubMed:24995978). Glycosylated by OGT; glycosylation in response to increased extracellular glucose levels is required for and leads to regulation of mitochondrial motility by OGT (PubMed:24995978).</text>
</comment>
<comment type="disease" evidence="12 13 14">
    <disease id="DI-05395">
        <name>Developmental and epileptic encephalopathy 68</name>
        <acronym>DEE68</acronym>
        <description>A form of epileptic encephalopathy, a heterogeneous group of severe early-onset epilepsies characterized by refractory seizures, neurodevelopmental impairment, and poor prognosis. Development is normal prior to seizure onset, after which cognitive and motor delays become apparent. DEE68 is an autosomal recessive form characterized by onset of twitching and/or myoclonic jerks in infancy. The disorder progresses to refractory generalized tonic-clonic seizures, often resulting in status epilepticus, loss of developmental milestones, and early death. Other features include delayed development, axial hypotonia, spasticity of the limbs, and clonus.</description>
        <dbReference type="MIM" id="618201"/>
    </disease>
    <text>The disease is caused by variants affecting the gene represented in this entry.</text>
</comment>
<comment type="miscellaneous">
    <text>Over-expressed in all investigated carcinomas, especially in gastric adenocarcinoma and signet-ring carcinoma and may serve as a marker of gastric cancer.</text>
</comment>
<comment type="similarity">
    <text evidence="18">Belongs to the milton family.</text>
</comment>
<comment type="sequence caution" evidence="18">
    <conflict type="erroneous initiation">
        <sequence resource="EMBL-CDS" id="BAA82994"/>
    </conflict>
    <text>Extended N-terminus.</text>
</comment>
<dbReference type="EMBL" id="AB028965">
    <property type="protein sequence ID" value="BAA82994.2"/>
    <property type="status" value="ALT_INIT"/>
    <property type="molecule type" value="mRNA"/>
</dbReference>
<dbReference type="EMBL" id="BX647199">
    <property type="protein sequence ID" value="CAH56169.1"/>
    <property type="molecule type" value="mRNA"/>
</dbReference>
<dbReference type="EMBL" id="AL713787">
    <property type="protein sequence ID" value="CAH56394.1"/>
    <property type="molecule type" value="mRNA"/>
</dbReference>
<dbReference type="EMBL" id="AC018358">
    <property type="status" value="NOT_ANNOTATED_CDS"/>
    <property type="molecule type" value="Genomic_DNA"/>
</dbReference>
<dbReference type="EMBL" id="AC093414">
    <property type="status" value="NOT_ANNOTATED_CDS"/>
    <property type="molecule type" value="Genomic_DNA"/>
</dbReference>
<dbReference type="EMBL" id="AC137935">
    <property type="status" value="NOT_ANNOTATED_CDS"/>
    <property type="molecule type" value="Genomic_DNA"/>
</dbReference>
<dbReference type="EMBL" id="BC015922">
    <property type="protein sequence ID" value="AAH15922.1"/>
    <property type="molecule type" value="mRNA"/>
</dbReference>
<dbReference type="CCDS" id="CCDS2695.1">
    <molecule id="Q9UPV9-2"/>
</dbReference>
<dbReference type="CCDS" id="CCDS43072.1">
    <molecule id="Q9UPV9-1"/>
</dbReference>
<dbReference type="CCDS" id="CCDS58826.1">
    <molecule id="Q9UPV9-3"/>
</dbReference>
<dbReference type="RefSeq" id="NP_001036111.1">
    <molecule id="Q9UPV9-1"/>
    <property type="nucleotide sequence ID" value="NM_001042646.3"/>
</dbReference>
<dbReference type="RefSeq" id="NP_001252537.1">
    <property type="nucleotide sequence ID" value="NM_001265608.1"/>
</dbReference>
<dbReference type="RefSeq" id="NP_001252539.1">
    <molecule id="Q9UPV9-3"/>
    <property type="nucleotide sequence ID" value="NM_001265610.1"/>
</dbReference>
<dbReference type="RefSeq" id="NP_055780.2">
    <molecule id="Q9UPV9-2"/>
    <property type="nucleotide sequence ID" value="NM_014965.4"/>
</dbReference>
<dbReference type="RefSeq" id="XP_024309170.1">
    <molecule id="Q9UPV9-1"/>
    <property type="nucleotide sequence ID" value="XM_024453402.2"/>
</dbReference>
<dbReference type="RefSeq" id="XP_054201670.1">
    <molecule id="Q9UPV9-1"/>
    <property type="nucleotide sequence ID" value="XM_054345695.1"/>
</dbReference>
<dbReference type="SMR" id="Q9UPV9"/>
<dbReference type="BioGRID" id="116570">
    <property type="interactions" value="75"/>
</dbReference>
<dbReference type="CORUM" id="Q9UPV9"/>
<dbReference type="FunCoup" id="Q9UPV9">
    <property type="interactions" value="2545"/>
</dbReference>
<dbReference type="IntAct" id="Q9UPV9">
    <property type="interactions" value="55"/>
</dbReference>
<dbReference type="MINT" id="Q9UPV9"/>
<dbReference type="STRING" id="9606.ENSP00000328998"/>
<dbReference type="GlyCosmos" id="Q9UPV9">
    <property type="glycosylation" value="8 sites, 1 glycan"/>
</dbReference>
<dbReference type="GlyGen" id="Q9UPV9">
    <property type="glycosylation" value="10 sites, 1 O-linked glycan (8 sites)"/>
</dbReference>
<dbReference type="iPTMnet" id="Q9UPV9"/>
<dbReference type="PhosphoSitePlus" id="Q9UPV9"/>
<dbReference type="BioMuta" id="TRAK1"/>
<dbReference type="DMDM" id="13124654"/>
<dbReference type="jPOST" id="Q9UPV9"/>
<dbReference type="MassIVE" id="Q9UPV9"/>
<dbReference type="PaxDb" id="9606-ENSP00000328998"/>
<dbReference type="PeptideAtlas" id="Q9UPV9"/>
<dbReference type="ProteomicsDB" id="19736"/>
<dbReference type="ProteomicsDB" id="85456">
    <molecule id="Q9UPV9-1"/>
</dbReference>
<dbReference type="ProteomicsDB" id="85457">
    <molecule id="Q9UPV9-2"/>
</dbReference>
<dbReference type="ABCD" id="Q9UPV9">
    <property type="antibodies" value="1 sequenced antibody"/>
</dbReference>
<dbReference type="Antibodypedia" id="1603">
    <property type="antibodies" value="192 antibodies from 33 providers"/>
</dbReference>
<dbReference type="DNASU" id="22906"/>
<dbReference type="Ensembl" id="ENST00000327628.10">
    <molecule id="Q9UPV9-1"/>
    <property type="protein sequence ID" value="ENSP00000328998.5"/>
    <property type="gene ID" value="ENSG00000182606.18"/>
</dbReference>
<dbReference type="Ensembl" id="ENST00000341421.7">
    <molecule id="Q9UPV9-2"/>
    <property type="protein sequence ID" value="ENSP00000340702.3"/>
    <property type="gene ID" value="ENSG00000182606.18"/>
</dbReference>
<dbReference type="Ensembl" id="ENST00000449246.5">
    <molecule id="Q9UPV9-3"/>
    <property type="protein sequence ID" value="ENSP00000410717.1"/>
    <property type="gene ID" value="ENSG00000182606.18"/>
</dbReference>
<dbReference type="GeneID" id="22906"/>
<dbReference type="KEGG" id="hsa:22906"/>
<dbReference type="MANE-Select" id="ENST00000327628.10">
    <property type="protein sequence ID" value="ENSP00000328998.5"/>
    <property type="RefSeq nucleotide sequence ID" value="NM_001042646.3"/>
    <property type="RefSeq protein sequence ID" value="NP_001036111.1"/>
</dbReference>
<dbReference type="UCSC" id="uc003cky.5">
    <molecule id="Q9UPV9-1"/>
    <property type="organism name" value="human"/>
</dbReference>
<dbReference type="AGR" id="HGNC:29947"/>
<dbReference type="CTD" id="22906"/>
<dbReference type="DisGeNET" id="22906"/>
<dbReference type="GeneCards" id="TRAK1"/>
<dbReference type="HGNC" id="HGNC:29947">
    <property type="gene designation" value="TRAK1"/>
</dbReference>
<dbReference type="HPA" id="ENSG00000182606">
    <property type="expression patterns" value="Tissue enhanced (heart muscle, skeletal muscle, tongue)"/>
</dbReference>
<dbReference type="MalaCards" id="TRAK1"/>
<dbReference type="MIM" id="608112">
    <property type="type" value="gene"/>
</dbReference>
<dbReference type="MIM" id="618201">
    <property type="type" value="phenotype"/>
</dbReference>
<dbReference type="neXtProt" id="NX_Q9UPV9"/>
<dbReference type="OpenTargets" id="ENSG00000182606"/>
<dbReference type="Orphanet" id="442835">
    <property type="disease" value="Non-specific early-onset epileptic encephalopathy"/>
</dbReference>
<dbReference type="PharmGKB" id="PA128394593"/>
<dbReference type="VEuPathDB" id="HostDB:ENSG00000182606"/>
<dbReference type="eggNOG" id="KOG4360">
    <property type="taxonomic scope" value="Eukaryota"/>
</dbReference>
<dbReference type="GeneTree" id="ENSGT00940000155697"/>
<dbReference type="HOGENOM" id="CLU_013450_0_0_1"/>
<dbReference type="InParanoid" id="Q9UPV9"/>
<dbReference type="OMA" id="PFDCRTP"/>
<dbReference type="OrthoDB" id="10067624at2759"/>
<dbReference type="PAN-GO" id="Q9UPV9">
    <property type="GO annotations" value="11 GO annotations based on evolutionary models"/>
</dbReference>
<dbReference type="PhylomeDB" id="Q9UPV9"/>
<dbReference type="TreeFam" id="TF323495"/>
<dbReference type="PathwayCommons" id="Q9UPV9"/>
<dbReference type="Reactome" id="R-HSA-6802952">
    <property type="pathway name" value="Signaling by BRAF and RAF1 fusions"/>
</dbReference>
<dbReference type="Reactome" id="R-HSA-9013419">
    <property type="pathway name" value="RHOT2 GTPase cycle"/>
</dbReference>
<dbReference type="Reactome" id="R-HSA-9013425">
    <property type="pathway name" value="RHOT1 GTPase cycle"/>
</dbReference>
<dbReference type="SignaLink" id="Q9UPV9"/>
<dbReference type="BioGRID-ORCS" id="22906">
    <property type="hits" value="14 hits in 1160 CRISPR screens"/>
</dbReference>
<dbReference type="ChiTaRS" id="TRAK1">
    <property type="organism name" value="human"/>
</dbReference>
<dbReference type="GeneWiki" id="TRAK1"/>
<dbReference type="GenomeRNAi" id="22906"/>
<dbReference type="Pharos" id="Q9UPV9">
    <property type="development level" value="Tbio"/>
</dbReference>
<dbReference type="PRO" id="PR:Q9UPV9"/>
<dbReference type="Proteomes" id="UP000005640">
    <property type="component" value="Chromosome 3"/>
</dbReference>
<dbReference type="RNAct" id="Q9UPV9">
    <property type="molecule type" value="protein"/>
</dbReference>
<dbReference type="Bgee" id="ENSG00000182606">
    <property type="expression patterns" value="Expressed in secondary oocyte and 212 other cell types or tissues"/>
</dbReference>
<dbReference type="ExpressionAtlas" id="Q9UPV9">
    <property type="expression patterns" value="baseline and differential"/>
</dbReference>
<dbReference type="GO" id="GO:1904115">
    <property type="term" value="C:axon cytoplasm"/>
    <property type="evidence" value="ECO:0007669"/>
    <property type="project" value="GOC"/>
</dbReference>
<dbReference type="GO" id="GO:0044295">
    <property type="term" value="C:axonal growth cone"/>
    <property type="evidence" value="ECO:0007669"/>
    <property type="project" value="Ensembl"/>
</dbReference>
<dbReference type="GO" id="GO:0005938">
    <property type="term" value="C:cell cortex"/>
    <property type="evidence" value="ECO:0007669"/>
    <property type="project" value="UniProtKB-SubCell"/>
</dbReference>
<dbReference type="GO" id="GO:0005737">
    <property type="term" value="C:cytoplasm"/>
    <property type="evidence" value="ECO:0000314"/>
    <property type="project" value="UniProtKB"/>
</dbReference>
<dbReference type="GO" id="GO:0031410">
    <property type="term" value="C:cytoplasmic vesicle"/>
    <property type="evidence" value="ECO:0000318"/>
    <property type="project" value="GO_Central"/>
</dbReference>
<dbReference type="GO" id="GO:0005829">
    <property type="term" value="C:cytosol"/>
    <property type="evidence" value="ECO:0000304"/>
    <property type="project" value="Reactome"/>
</dbReference>
<dbReference type="GO" id="GO:0030425">
    <property type="term" value="C:dendrite"/>
    <property type="evidence" value="ECO:0000318"/>
    <property type="project" value="GO_Central"/>
</dbReference>
<dbReference type="GO" id="GO:0005769">
    <property type="term" value="C:early endosome"/>
    <property type="evidence" value="ECO:0000314"/>
    <property type="project" value="UniProtKB"/>
</dbReference>
<dbReference type="GO" id="GO:0031966">
    <property type="term" value="C:mitochondrial membrane"/>
    <property type="evidence" value="ECO:0007669"/>
    <property type="project" value="UniProtKB-SubCell"/>
</dbReference>
<dbReference type="GO" id="GO:0005739">
    <property type="term" value="C:mitochondrion"/>
    <property type="evidence" value="ECO:0000314"/>
    <property type="project" value="UniProtKB"/>
</dbReference>
<dbReference type="GO" id="GO:0005634">
    <property type="term" value="C:nucleus"/>
    <property type="evidence" value="ECO:0000250"/>
    <property type="project" value="UniProtKB"/>
</dbReference>
<dbReference type="GO" id="GO:0048471">
    <property type="term" value="C:perinuclear region of cytoplasm"/>
    <property type="evidence" value="ECO:0007669"/>
    <property type="project" value="Ensembl"/>
</dbReference>
<dbReference type="GO" id="GO:0050811">
    <property type="term" value="F:GABA receptor binding"/>
    <property type="evidence" value="ECO:0000318"/>
    <property type="project" value="GO_Central"/>
</dbReference>
<dbReference type="GO" id="GO:0017022">
    <property type="term" value="F:myosin binding"/>
    <property type="evidence" value="ECO:0000318"/>
    <property type="project" value="GO_Central"/>
</dbReference>
<dbReference type="GO" id="GO:0030911">
    <property type="term" value="F:TPR domain binding"/>
    <property type="evidence" value="ECO:0007669"/>
    <property type="project" value="Ensembl"/>
</dbReference>
<dbReference type="GO" id="GO:0019896">
    <property type="term" value="P:axonal transport of mitochondrion"/>
    <property type="evidence" value="ECO:0007669"/>
    <property type="project" value="Ensembl"/>
</dbReference>
<dbReference type="GO" id="GO:0048813">
    <property type="term" value="P:dendrite morphogenesis"/>
    <property type="evidence" value="ECO:0007669"/>
    <property type="project" value="Ensembl"/>
</dbReference>
<dbReference type="GO" id="GO:0008333">
    <property type="term" value="P:endosome to lysosome transport"/>
    <property type="evidence" value="ECO:0000314"/>
    <property type="project" value="UniProtKB"/>
</dbReference>
<dbReference type="GO" id="GO:0048311">
    <property type="term" value="P:mitochondrion distribution"/>
    <property type="evidence" value="ECO:0000318"/>
    <property type="project" value="GO_Central"/>
</dbReference>
<dbReference type="GO" id="GO:0022008">
    <property type="term" value="P:neurogenesis"/>
    <property type="evidence" value="ECO:0000318"/>
    <property type="project" value="GO_Central"/>
</dbReference>
<dbReference type="GO" id="GO:0050772">
    <property type="term" value="P:positive regulation of axonogenesis"/>
    <property type="evidence" value="ECO:0007669"/>
    <property type="project" value="Ensembl"/>
</dbReference>
<dbReference type="GO" id="GO:0006493">
    <property type="term" value="P:protein O-linked glycosylation"/>
    <property type="evidence" value="ECO:0000250"/>
    <property type="project" value="UniProtKB"/>
</dbReference>
<dbReference type="GO" id="GO:0006605">
    <property type="term" value="P:protein targeting"/>
    <property type="evidence" value="ECO:0000250"/>
    <property type="project" value="UniProtKB"/>
</dbReference>
<dbReference type="GO" id="GO:0006357">
    <property type="term" value="P:regulation of transcription by RNA polymerase II"/>
    <property type="evidence" value="ECO:0000250"/>
    <property type="project" value="UniProtKB"/>
</dbReference>
<dbReference type="GO" id="GO:0047496">
    <property type="term" value="P:vesicle transport along microtubule"/>
    <property type="evidence" value="ECO:0000318"/>
    <property type="project" value="GO_Central"/>
</dbReference>
<dbReference type="InterPro" id="IPR006933">
    <property type="entry name" value="HAP1_N"/>
</dbReference>
<dbReference type="InterPro" id="IPR051946">
    <property type="entry name" value="Intracell_Traff-Reg"/>
</dbReference>
<dbReference type="InterPro" id="IPR022154">
    <property type="entry name" value="TRAK1/2_C"/>
</dbReference>
<dbReference type="PANTHER" id="PTHR15751">
    <property type="entry name" value="TRAFFICKING KINESIN-BINDING PROTEIN"/>
    <property type="match status" value="1"/>
</dbReference>
<dbReference type="PANTHER" id="PTHR15751:SF11">
    <property type="entry name" value="TRAFFICKING KINESIN-BINDING PROTEIN 1"/>
    <property type="match status" value="1"/>
</dbReference>
<dbReference type="Pfam" id="PF04849">
    <property type="entry name" value="HAP1_N"/>
    <property type="match status" value="1"/>
</dbReference>
<dbReference type="Pfam" id="PF12448">
    <property type="entry name" value="Milton"/>
    <property type="match status" value="1"/>
</dbReference>
<dbReference type="SMART" id="SM01424">
    <property type="entry name" value="HAP1_N"/>
    <property type="match status" value="1"/>
</dbReference>
<dbReference type="SMART" id="SM01423">
    <property type="entry name" value="Milton"/>
    <property type="match status" value="1"/>
</dbReference>
<feature type="chain" id="PRO_0000058037" description="Trafficking kinesin-binding protein 1">
    <location>
        <begin position="1"/>
        <end position="953"/>
    </location>
</feature>
<feature type="domain" description="HAP1 N-terminal">
    <location>
        <begin position="47"/>
        <end position="354"/>
    </location>
</feature>
<feature type="region of interest" description="Interaction with HGS" evidence="8">
    <location>
        <begin position="359"/>
        <end position="509"/>
    </location>
</feature>
<feature type="region of interest" description="Disordered" evidence="4">
    <location>
        <begin position="472"/>
        <end position="495"/>
    </location>
</feature>
<feature type="region of interest" description="Interaction with OGT" evidence="11">
    <location>
        <begin position="658"/>
        <end position="672"/>
    </location>
</feature>
<feature type="region of interest" description="Disordered" evidence="4">
    <location>
        <begin position="777"/>
        <end position="796"/>
    </location>
</feature>
<feature type="coiled-coil region" evidence="3">
    <location>
        <begin position="104"/>
        <end position="356"/>
    </location>
</feature>
<feature type="coiled-coil region" evidence="3">
    <location>
        <begin position="492"/>
        <end position="532"/>
    </location>
</feature>
<feature type="compositionally biased region" description="Low complexity" evidence="4">
    <location>
        <begin position="786"/>
        <end position="796"/>
    </location>
</feature>
<feature type="modified residue" description="Phosphoserine" evidence="1">
    <location>
        <position position="537"/>
    </location>
</feature>
<feature type="modified residue" description="Phosphoserine" evidence="1">
    <location>
        <position position="719"/>
    </location>
</feature>
<feature type="modified residue" description="Phosphoserine" evidence="19">
    <location>
        <position position="919"/>
    </location>
</feature>
<feature type="glycosylation site" description="O-linked (GlcNAc) serine" evidence="11">
    <location>
        <position position="447"/>
    </location>
</feature>
<feature type="glycosylation site" description="O-linked (GlcNAc) serine" evidence="11">
    <location>
        <position position="680"/>
    </location>
</feature>
<feature type="glycosylation site" description="O-linked (GlcNAc) serine" evidence="11">
    <location>
        <position position="719"/>
    </location>
</feature>
<feature type="glycosylation site" description="O-linked (GlcNAc) threonine" evidence="11">
    <location>
        <position position="935"/>
    </location>
</feature>
<feature type="splice variant" id="VSP_045558" description="In isoform 3." evidence="16">
    <original>MALVFQFGQPVRAQPLPGLCHGKLIRTNACDVCNSTDLPEVEIISLLEEQLPHYKLRADTIYGYDHDDWLHTPLISPDANIDLTTEQIEETLKYFLL</original>
    <variation>MQKFIEADYYELDWYYEECSDVL</variation>
    <location>
        <begin position="1"/>
        <end position="97"/>
    </location>
</feature>
<feature type="splice variant" id="VSP_010839" description="In isoform 2." evidence="15 16">
    <original>MALVFQFGQPVRAQPLPGLCHGKLIRTNACDVCNSTDLPEVEIISLLEEQLPHYKLRADTIYGYDHDDWLHTPLISPDANIDLTTEQIEETLKYFL</original>
    <variation>MSLRDKGGEEECFEYDCQDEERKPTHRQHDTQDLLEEV</variation>
    <location>
        <begin position="1"/>
        <end position="96"/>
    </location>
</feature>
<feature type="splice variant" id="VSP_045559" description="In isoform 3." evidence="16">
    <original>SATLHHWQQLAQPHLGGILDPRPGVVTKGFRTLDVDLDEVYCLNDFEE</original>
    <variation>DHAGPRPLSVLLGDSLWSLIHLRKAGHLCHAYSFFFRDSHPRCWFEFL</variation>
    <location>
        <begin position="583"/>
        <end position="630"/>
    </location>
</feature>
<feature type="splice variant" id="VSP_045560" description="In isoform 3." evidence="16">
    <location>
        <begin position="631"/>
        <end position="953"/>
    </location>
</feature>
<feature type="splice variant" id="VSP_010840" description="In isoform 2." evidence="15 16">
    <original>AHHPGKCMSQTNSTFTFTTCRILHPSDELTRVTPSLNSAPTPACGSTSHLKSTPVATPCTPRRLSLAESFTNTRESTTTMSTSLGLVWLL</original>
    <variation>GERSQARVTVSGSRSYPSRPQASPEEMQEPPAATEEEEEEEEEEGSGEGTTISPVNLAPFPEAEFWAILTSVPGTIRSGSLSVASARLCG</variation>
    <location>
        <begin position="655"/>
        <end position="744"/>
    </location>
</feature>
<feature type="splice variant" id="VSP_010841" description="In isoform 2." evidence="15 16">
    <location>
        <begin position="745"/>
        <end position="953"/>
    </location>
</feature>
<feature type="sequence variant" id="VAR_081639" description="In DEE68; uncertain significance; dbSNP:rs770281448." evidence="14">
    <original>L</original>
    <variation>P</variation>
    <location>
        <position position="329"/>
    </location>
</feature>
<feature type="mutagenesis site" description="Reduced O-glycosylation of this protein." evidence="11">
    <original>S</original>
    <variation>A</variation>
    <location>
        <position position="447"/>
    </location>
</feature>
<feature type="mutagenesis site" description="Loss of interaction with OGT, but interacts with KIF5B and RHOT1/2 and is able to localize to mitochondria. Increased O-glycosylation of this protein by OGT." evidence="11">
    <location>
        <begin position="658"/>
        <end position="672"/>
    </location>
</feature>
<feature type="mutagenesis site" description="Reduced O-glycosylation of this protein; when associated with A-830." evidence="11">
    <original>S</original>
    <variation>A</variation>
    <location>
        <position position="829"/>
    </location>
</feature>
<feature type="mutagenesis site" description="Reduced O-glycosylation of this protein; when associated with A-829." evidence="11">
    <original>S</original>
    <variation>A</variation>
    <location>
        <position position="830"/>
    </location>
</feature>
<feature type="mutagenesis site" description="Reduced O-glycosylation of this protein." evidence="11">
    <original>S</original>
    <variation>A</variation>
    <location>
        <position position="938"/>
    </location>
</feature>
<feature type="sequence conflict" description="In Ref. 2; CAH56169." evidence="18" ref="2">
    <original>S</original>
    <variation>P</variation>
    <location>
        <position position="503"/>
    </location>
</feature>
<feature type="sequence conflict" description="In Ref. 2; CAH56169." evidence="18" ref="2">
    <original>S</original>
    <variation>F</variation>
    <location>
        <position position="638"/>
    </location>
</feature>
<feature type="sequence conflict" description="In Ref. 2; CAH56169." evidence="18" ref="2">
    <original>E</original>
    <variation>EE</variation>
    <location sequence="Q9UPV9-2">
        <position position="631"/>
    </location>
</feature>
<feature type="sequence conflict" description="In Ref. 4; AAH15922." evidence="18" ref="4">
    <original>E</original>
    <variation>EEE</variation>
    <location sequence="Q9UPV9-2">
        <position position="631"/>
    </location>
</feature>